<name>NDF1_HUMAN</name>
<keyword id="KW-0010">Activator</keyword>
<keyword id="KW-0963">Cytoplasm</keyword>
<keyword id="KW-0217">Developmental protein</keyword>
<keyword id="KW-0219">Diabetes mellitus</keyword>
<keyword id="KW-0221">Differentiation</keyword>
<keyword id="KW-0225">Disease variant</keyword>
<keyword id="KW-0238">DNA-binding</keyword>
<keyword id="KW-0524">Neurogenesis</keyword>
<keyword id="KW-0539">Nucleus</keyword>
<keyword id="KW-0597">Phosphoprotein</keyword>
<keyword id="KW-1267">Proteomics identification</keyword>
<keyword id="KW-1185">Reference proteome</keyword>
<keyword id="KW-0804">Transcription</keyword>
<keyword id="KW-0805">Transcription regulation</keyword>
<accession>Q13562</accession>
<accession>B2R9I8</accession>
<accession>F1T0E1</accession>
<accession>O00343</accession>
<accession>Q13340</accession>
<accession>Q5U095</accession>
<accession>Q96TH0</accession>
<accession>Q99455</accession>
<accession>Q9UEC8</accession>
<evidence type="ECO:0000250" key="1"/>
<evidence type="ECO:0000250" key="2">
    <source>
        <dbReference type="UniProtKB" id="Q60867"/>
    </source>
</evidence>
<evidence type="ECO:0000250" key="3">
    <source>
        <dbReference type="UniProtKB" id="Q64289"/>
    </source>
</evidence>
<evidence type="ECO:0000255" key="4"/>
<evidence type="ECO:0000255" key="5">
    <source>
        <dbReference type="PROSITE-ProRule" id="PRU00981"/>
    </source>
</evidence>
<evidence type="ECO:0000256" key="6">
    <source>
        <dbReference type="SAM" id="MobiDB-lite"/>
    </source>
</evidence>
<evidence type="ECO:0000269" key="7">
    <source>
    </source>
</evidence>
<evidence type="ECO:0000269" key="8">
    <source>
    </source>
</evidence>
<evidence type="ECO:0000269" key="9">
    <source>
    </source>
</evidence>
<evidence type="ECO:0000269" key="10">
    <source>
    </source>
</evidence>
<evidence type="ECO:0000269" key="11">
    <source>
    </source>
</evidence>
<evidence type="ECO:0000269" key="12">
    <source>
    </source>
</evidence>
<evidence type="ECO:0000269" key="13">
    <source>
    </source>
</evidence>
<evidence type="ECO:0000269" key="14">
    <source>
    </source>
</evidence>
<evidence type="ECO:0000269" key="15">
    <source>
    </source>
</evidence>
<evidence type="ECO:0000269" key="16">
    <source>
    </source>
</evidence>
<evidence type="ECO:0000269" key="17">
    <source>
    </source>
</evidence>
<evidence type="ECO:0000269" key="18">
    <source>
    </source>
</evidence>
<evidence type="ECO:0000269" key="19">
    <source ref="11"/>
</evidence>
<evidence type="ECO:0000269" key="20">
    <source ref="3"/>
</evidence>
<evidence type="ECO:0000269" key="21">
    <source ref="5"/>
</evidence>
<evidence type="ECO:0000269" key="22">
    <source ref="6"/>
</evidence>
<evidence type="ECO:0000305" key="23"/>
<sequence>MTKSYSESGLMGEPQPQGPPSWTDECLSSQDEEHEADKKEDDLETMNAEEDSLRNGGEEEDEDEDLEEEEEEEEEDDDQKPKRRGPKKKKMTKARLERFKLRRMKANARERNRMHGLNAALDNLRKVVPCYSKTQKLSKIETLRLAKNYIWALSEILRSGKSPDLVSFVQTLCKGLSQPTTNLVAGCLQLNPRTFLPEQNQDMPPHLPTASASFPVHPYSYQSPGLPSPPYGTMDSSHVFHVKPPPHAYSAALEPFFESPLTDCTSPSFDGPLSPPLSINGNFSFKHEPSAEFEKNYAFTMHYPAATLAGAQSHGSIFSGTAAPRCEIPIDNIMSFDSHSHHERVMSAQLNAIFHD</sequence>
<feature type="chain" id="PRO_0000127381" description="Neurogenic differentiation factor 1">
    <location>
        <begin position="1"/>
        <end position="356"/>
    </location>
</feature>
<feature type="domain" description="bHLH" evidence="5">
    <location>
        <begin position="101"/>
        <end position="153"/>
    </location>
</feature>
<feature type="region of interest" description="Disordered" evidence="6">
    <location>
        <begin position="1"/>
        <end position="94"/>
    </location>
</feature>
<feature type="short sequence motif" description="Nuclear localization signal" evidence="4">
    <location>
        <begin position="87"/>
        <end position="93"/>
    </location>
</feature>
<feature type="compositionally biased region" description="Acidic residues" evidence="6">
    <location>
        <begin position="58"/>
        <end position="78"/>
    </location>
</feature>
<feature type="compositionally biased region" description="Basic residues" evidence="6">
    <location>
        <begin position="81"/>
        <end position="93"/>
    </location>
</feature>
<feature type="modified residue" description="Phosphoserine" evidence="2">
    <location>
        <position position="162"/>
    </location>
</feature>
<feature type="modified residue" description="Phosphoserine" evidence="2">
    <location>
        <position position="259"/>
    </location>
</feature>
<feature type="modified residue" description="Phosphoserine" evidence="2">
    <location>
        <position position="266"/>
    </location>
</feature>
<feature type="modified residue" description="Phosphoserine" evidence="2">
    <location>
        <position position="274"/>
    </location>
</feature>
<feature type="modified residue" description="Phosphoserine; by CaMK2" evidence="3">
    <location>
        <position position="335"/>
    </location>
</feature>
<feature type="sequence variant" id="VAR_014820" description="In dbSNP:rs1801262." evidence="7 11 13 14 17 18 19 20 21 22">
    <original>T</original>
    <variation>A</variation>
    <location>
        <position position="45"/>
    </location>
</feature>
<feature type="sequence variant" id="VAR_076552" description="In MODY6." evidence="16">
    <original>R</original>
    <variation>P</variation>
    <location>
        <position position="103"/>
    </location>
</feature>
<feature type="sequence variant" id="VAR_076553" description="In MODY6; uncertain significance; dbSNP:rs763092306." evidence="9">
    <original>E</original>
    <variation>K</variation>
    <location>
        <position position="110"/>
    </location>
</feature>
<feature type="sequence variant" id="VAR_012487" description="In T2D; dbSNP:rs104893649." evidence="8">
    <original>R</original>
    <variation>L</variation>
    <location>
        <position position="111"/>
    </location>
</feature>
<feature type="sequence variant" id="VAR_031260" description="In dbSNP:rs8192556.">
    <original>P</original>
    <variation>H</variation>
    <location>
        <position position="197"/>
    </location>
</feature>
<feature type="sequence variant" id="VAR_076554" description="Found in one consanguineous family with non-syndromic autosomal recessive retinitis pigmentosa; uncertain significance; dbSNP:rs786205158." evidence="15">
    <original>V</original>
    <variation>I</variation>
    <location>
        <position position="242"/>
    </location>
</feature>
<feature type="sequence conflict" description="In Ref. 1; AAA93480." evidence="23" ref="1">
    <original>L</original>
    <variation>S</variation>
    <location>
        <position position="157"/>
    </location>
</feature>
<feature type="sequence conflict" description="In Ref. 2; BAA11558 and 5; BAA87605." evidence="23" ref="2 5">
    <original>A</original>
    <variation>G</variation>
    <location>
        <position position="185"/>
    </location>
</feature>
<feature type="sequence conflict" description="In Ref. 6; BAA36519." evidence="23" ref="6">
    <original>G</original>
    <variation>D</variation>
    <location>
        <position position="232"/>
    </location>
</feature>
<protein>
    <recommendedName>
        <fullName>Neurogenic differentiation factor 1</fullName>
        <shortName>NeuroD</shortName>
        <shortName>NeuroD1</shortName>
    </recommendedName>
    <alternativeName>
        <fullName>Class A basic helix-loop-helix protein 3</fullName>
        <shortName>bHLHa3</shortName>
    </alternativeName>
</protein>
<comment type="function">
    <text evidence="2">Acts as a transcriptional activator: mediates transcriptional activation by binding to E box-containing promoter consensus core sequences 5'-CANNTG-3'. Associates with the p300/CBP transcription coactivator complex to stimulate transcription of the secretin gene as well as the gene encoding the cyclin-dependent kinase inhibitor CDKN1A. Contributes to the regulation of several cell differentiation pathways, like those that promote the formation of early retinal ganglion cells, inner ear sensory neurons, granule cells forming either the cerebellum or the dentate gyrus cell layer of the hippocampus, endocrine islet cells of the pancreas and enteroendocrine cells of the small intestine. Together with PAX6 or SIX3, is required for the regulation of amacrine cell fate specification. Also required for dendrite morphogenesis and maintenance in the cerebellar cortex. Associates with chromatin to enhancer regulatory elements in genes encoding key transcriptional regulators of neurogenesis (By similarity).</text>
</comment>
<comment type="subunit">
    <text evidence="2 10 12">Efficient DNA-binding requires dimerization with another bHLH protein (By similarity). Heterodimer with TCF3/E47; the heterodimer is inhibited in presence of ID2, but not NR0B2, to E-box element (PubMed:14752053). Interacts with EP300; the interaction is inhibited by NR0B2 (PubMed:14752053). Interacts with RREB1 (PubMed:12482979). Interacts with ATOH8 (By similarity).</text>
</comment>
<comment type="interaction">
    <interactant intactId="EBI-3908303">
        <id>Q13562</id>
    </interactant>
    <interactant intactId="EBI-10226858">
        <id>Q0VDC6</id>
        <label>FKBP1A</label>
    </interactant>
    <organismsDiffer>false</organismsDiffer>
    <experiments>3</experiments>
</comment>
<comment type="interaction">
    <interactant intactId="EBI-3908303">
        <id>Q13562</id>
    </interactant>
    <interactant intactId="EBI-356991">
        <id>P54652</id>
        <label>HSPA2</label>
    </interactant>
    <organismsDiffer>false</organismsDiffer>
    <experiments>3</experiments>
</comment>
<comment type="interaction">
    <interactant intactId="EBI-3908303">
        <id>Q13562</id>
    </interactant>
    <interactant intactId="EBI-517086">
        <id>O43464</id>
        <label>HTRA2</label>
    </interactant>
    <organismsDiffer>false</organismsDiffer>
    <experiments>3</experiments>
</comment>
<comment type="interaction">
    <interactant intactId="EBI-3908303">
        <id>Q13562</id>
    </interactant>
    <interactant intactId="EBI-466029">
        <id>P42858</id>
        <label>HTT</label>
    </interactant>
    <organismsDiffer>false</organismsDiffer>
    <experiments>6</experiments>
</comment>
<comment type="interaction">
    <interactant intactId="EBI-3908303">
        <id>Q13562</id>
    </interactant>
    <interactant intactId="EBI-948266">
        <id>O14901</id>
        <label>KLF11</label>
    </interactant>
    <organismsDiffer>false</organismsDiffer>
    <experiments>3</experiments>
</comment>
<comment type="interaction">
    <interactant intactId="EBI-3908303">
        <id>Q13562</id>
    </interactant>
    <interactant intactId="EBI-6190702">
        <id>P28331-2</id>
        <label>NDUFS1</label>
    </interactant>
    <organismsDiffer>false</organismsDiffer>
    <experiments>3</experiments>
</comment>
<comment type="interaction">
    <interactant intactId="EBI-3908303">
        <id>Q13562</id>
    </interactant>
    <interactant intactId="EBI-2811583">
        <id>Q9BVL2</id>
        <label>NUP58</label>
    </interactant>
    <organismsDiffer>false</organismsDiffer>
    <experiments>3</experiments>
</comment>
<comment type="interaction">
    <interactant intactId="EBI-3908303">
        <id>Q13562</id>
    </interactant>
    <interactant intactId="EBI-752074">
        <id>P41219</id>
        <label>PRPH</label>
    </interactant>
    <organismsDiffer>false</organismsDiffer>
    <experiments>3</experiments>
</comment>
<comment type="interaction">
    <interactant intactId="EBI-3908303">
        <id>Q13562</id>
    </interactant>
    <interactant intactId="EBI-11952764">
        <id>Q99081-3</id>
        <label>TCF12</label>
    </interactant>
    <organismsDiffer>false</organismsDiffer>
    <experiments>4</experiments>
</comment>
<comment type="interaction">
    <interactant intactId="EBI-3908303">
        <id>Q13562</id>
    </interactant>
    <interactant intactId="EBI-13636688">
        <id>P15884-3</id>
        <label>TCF4</label>
    </interactant>
    <organismsDiffer>false</organismsDiffer>
    <experiments>3</experiments>
</comment>
<comment type="subcellular location">
    <subcellularLocation>
        <location evidence="1">Cytoplasm</location>
    </subcellularLocation>
    <subcellularLocation>
        <location evidence="5 12">Nucleus</location>
    </subcellularLocation>
    <text evidence="1">In pancreatic islet cells, shuttles to the nucleus in response to glucose stimulation (By similarity). Colocalizes with NR0B2 in the nucleus.</text>
</comment>
<comment type="PTM">
    <text evidence="1">Phosphorylated. In islet cells, phosphorylated on Ser-274 upon glucose stimulation; which may be required for nuclear localization. In activated neurons, phosphorylated on Ser-335; which promotes dendritic growth. Phosphorylated by MAPK1; phosphorylation regulates heterodimerization and DNA-binding activities. Phosphorylation on Ser-266 and Ser-274 increases transactivation on the insulin promoter in glucose-stimulated insulinoma cells (By similarity).</text>
</comment>
<comment type="disease" evidence="8 9 16">
    <disease id="DI-01947">
        <name>Maturity-onset diabetes of the young 6</name>
        <acronym>MODY6</acronym>
        <description>A form of diabetes that is characterized by an autosomal dominant mode of inheritance, onset in childhood or early adulthood (usually before 25 years of age), a primary defect in insulin secretion and frequent insulin-independence at the beginning of the disease.</description>
        <dbReference type="MIM" id="606394"/>
    </disease>
    <text>The disease is caused by variants affecting the gene represented in this entry.</text>
</comment>
<comment type="disease" evidence="8">
    <disease id="DI-02060">
        <name>Type 2 diabetes mellitus</name>
        <acronym>T2D</acronym>
        <description>A multifactorial disorder of glucose homeostasis caused by a lack of sensitivity to insulin. Affected individuals usually have an obese body habitus and manifestations of a metabolic syndrome characterized by diabetes, insulin resistance, hypertension and hypertriglyceridemia. The disease results in long-term complications that affect the eyes, kidneys, nerves, and blood vessels.</description>
        <dbReference type="MIM" id="125853"/>
    </disease>
    <text>Disease susceptibility is associated with variants affecting the gene represented in this entry.</text>
</comment>
<organism>
    <name type="scientific">Homo sapiens</name>
    <name type="common">Human</name>
    <dbReference type="NCBI Taxonomy" id="9606"/>
    <lineage>
        <taxon>Eukaryota</taxon>
        <taxon>Metazoa</taxon>
        <taxon>Chordata</taxon>
        <taxon>Craniata</taxon>
        <taxon>Vertebrata</taxon>
        <taxon>Euteleostomi</taxon>
        <taxon>Mammalia</taxon>
        <taxon>Eutheria</taxon>
        <taxon>Euarchontoglires</taxon>
        <taxon>Primates</taxon>
        <taxon>Haplorrhini</taxon>
        <taxon>Catarrhini</taxon>
        <taxon>Hominidae</taxon>
        <taxon>Homo</taxon>
    </lineage>
</organism>
<dbReference type="EMBL" id="U50822">
    <property type="protein sequence ID" value="AAA93480.1"/>
    <property type="molecule type" value="Genomic_DNA"/>
</dbReference>
<dbReference type="EMBL" id="D82347">
    <property type="protein sequence ID" value="BAA11558.1"/>
    <property type="molecule type" value="mRNA"/>
</dbReference>
<dbReference type="EMBL" id="AF045152">
    <property type="protein sequence ID" value="AAC83145.1"/>
    <property type="molecule type" value="Genomic_DNA"/>
</dbReference>
<dbReference type="EMBL" id="AB018693">
    <property type="protein sequence ID" value="BAA76603.1"/>
    <property type="molecule type" value="Genomic_DNA"/>
</dbReference>
<dbReference type="EMBL" id="AB009997">
    <property type="protein sequence ID" value="BAA87605.1"/>
    <property type="molecule type" value="Genomic_DNA"/>
</dbReference>
<dbReference type="EMBL" id="AB016079">
    <property type="protein sequence ID" value="BAA36519.1"/>
    <property type="molecule type" value="Genomic_DNA"/>
</dbReference>
<dbReference type="EMBL" id="BT019731">
    <property type="protein sequence ID" value="AAV38536.1"/>
    <property type="molecule type" value="mRNA"/>
</dbReference>
<dbReference type="EMBL" id="AK313799">
    <property type="protein sequence ID" value="BAG36535.1"/>
    <property type="molecule type" value="mRNA"/>
</dbReference>
<dbReference type="EMBL" id="AB593068">
    <property type="protein sequence ID" value="BAJ84015.1"/>
    <property type="molecule type" value="mRNA"/>
</dbReference>
<dbReference type="EMBL" id="AB593069">
    <property type="protein sequence ID" value="BAJ84016.1"/>
    <property type="molecule type" value="mRNA"/>
</dbReference>
<dbReference type="EMBL" id="AB593070">
    <property type="protein sequence ID" value="BAJ84017.1"/>
    <property type="molecule type" value="mRNA"/>
</dbReference>
<dbReference type="EMBL" id="AB593071">
    <property type="protein sequence ID" value="BAJ84018.1"/>
    <property type="molecule type" value="mRNA"/>
</dbReference>
<dbReference type="EMBL" id="AC013733">
    <property type="protein sequence ID" value="AAY24267.1"/>
    <property type="molecule type" value="Genomic_DNA"/>
</dbReference>
<dbReference type="EMBL" id="CH471058">
    <property type="protein sequence ID" value="EAX10983.1"/>
    <property type="molecule type" value="Genomic_DNA"/>
</dbReference>
<dbReference type="EMBL" id="BC009046">
    <property type="protein sequence ID" value="AAH09046.1"/>
    <property type="molecule type" value="mRNA"/>
</dbReference>
<dbReference type="EMBL" id="U80578">
    <property type="protein sequence ID" value="AAC51318.1"/>
    <property type="molecule type" value="mRNA"/>
</dbReference>
<dbReference type="EMBL" id="U36472">
    <property type="protein sequence ID" value="AAA79702.1"/>
    <property type="molecule type" value="mRNA"/>
</dbReference>
<dbReference type="CCDS" id="CCDS2283.1"/>
<dbReference type="RefSeq" id="NP_002491.3">
    <property type="nucleotide sequence ID" value="NM_002500.5"/>
</dbReference>
<dbReference type="SMR" id="Q13562"/>
<dbReference type="BioGRID" id="110833">
    <property type="interactions" value="21"/>
</dbReference>
<dbReference type="FunCoup" id="Q13562">
    <property type="interactions" value="1460"/>
</dbReference>
<dbReference type="IntAct" id="Q13562">
    <property type="interactions" value="14"/>
</dbReference>
<dbReference type="STRING" id="9606.ENSP00000295108"/>
<dbReference type="CarbonylDB" id="Q13562"/>
<dbReference type="GlyGen" id="Q13562">
    <property type="glycosylation" value="1 site"/>
</dbReference>
<dbReference type="iPTMnet" id="Q13562"/>
<dbReference type="PhosphoSitePlus" id="Q13562"/>
<dbReference type="BioMuta" id="NEUROD1"/>
<dbReference type="DMDM" id="311033428"/>
<dbReference type="jPOST" id="Q13562"/>
<dbReference type="MassIVE" id="Q13562"/>
<dbReference type="PaxDb" id="9606-ENSP00000295108"/>
<dbReference type="PeptideAtlas" id="Q13562"/>
<dbReference type="Antibodypedia" id="922">
    <property type="antibodies" value="536 antibodies from 40 providers"/>
</dbReference>
<dbReference type="DNASU" id="4760"/>
<dbReference type="Ensembl" id="ENST00000295108.4">
    <property type="protein sequence ID" value="ENSP00000295108.3"/>
    <property type="gene ID" value="ENSG00000162992.5"/>
</dbReference>
<dbReference type="Ensembl" id="ENST00000683430.1">
    <property type="protein sequence ID" value="ENSP00000506907.1"/>
    <property type="gene ID" value="ENSG00000162992.5"/>
</dbReference>
<dbReference type="Ensembl" id="ENST00000684079.1">
    <property type="protein sequence ID" value="ENSP00000507492.1"/>
    <property type="gene ID" value="ENSG00000162992.5"/>
</dbReference>
<dbReference type="GeneID" id="4760"/>
<dbReference type="KEGG" id="hsa:4760"/>
<dbReference type="MANE-Select" id="ENST00000295108.4">
    <property type="protein sequence ID" value="ENSP00000295108.3"/>
    <property type="RefSeq nucleotide sequence ID" value="NM_002500.5"/>
    <property type="RefSeq protein sequence ID" value="NP_002491.3"/>
</dbReference>
<dbReference type="UCSC" id="uc002uof.5">
    <property type="organism name" value="human"/>
</dbReference>
<dbReference type="AGR" id="HGNC:7762"/>
<dbReference type="CTD" id="4760"/>
<dbReference type="DisGeNET" id="4760"/>
<dbReference type="GeneCards" id="NEUROD1"/>
<dbReference type="GeneReviews" id="NEUROD1"/>
<dbReference type="HGNC" id="HGNC:7762">
    <property type="gene designation" value="NEUROD1"/>
</dbReference>
<dbReference type="HPA" id="ENSG00000162992">
    <property type="expression patterns" value="Group enriched (brain, retina)"/>
</dbReference>
<dbReference type="MalaCards" id="NEUROD1"/>
<dbReference type="MIM" id="125853">
    <property type="type" value="phenotype"/>
</dbReference>
<dbReference type="MIM" id="601724">
    <property type="type" value="gene"/>
</dbReference>
<dbReference type="MIM" id="606394">
    <property type="type" value="phenotype"/>
</dbReference>
<dbReference type="neXtProt" id="NX_Q13562"/>
<dbReference type="OpenTargets" id="ENSG00000162992"/>
<dbReference type="Orphanet" id="552">
    <property type="disease" value="MODY"/>
</dbReference>
<dbReference type="PharmGKB" id="PA31564"/>
<dbReference type="VEuPathDB" id="HostDB:ENSG00000162992"/>
<dbReference type="eggNOG" id="KOG3898">
    <property type="taxonomic scope" value="Eukaryota"/>
</dbReference>
<dbReference type="GeneTree" id="ENSGT00940000160478"/>
<dbReference type="HOGENOM" id="CLU_055134_0_0_1"/>
<dbReference type="InParanoid" id="Q13562"/>
<dbReference type="OMA" id="SFKHEPA"/>
<dbReference type="OrthoDB" id="10039134at2759"/>
<dbReference type="PAN-GO" id="Q13562">
    <property type="GO annotations" value="5 GO annotations based on evolutionary models"/>
</dbReference>
<dbReference type="PhylomeDB" id="Q13562"/>
<dbReference type="TreeFam" id="TF315153"/>
<dbReference type="PathwayCommons" id="Q13562"/>
<dbReference type="Reactome" id="R-HSA-210745">
    <property type="pathway name" value="Regulation of gene expression in beta cells"/>
</dbReference>
<dbReference type="Reactome" id="R-HSA-210746">
    <property type="pathway name" value="Regulation of gene expression in endocrine-committed (NEUROG3+) progenitor cells"/>
</dbReference>
<dbReference type="SignaLink" id="Q13562"/>
<dbReference type="SIGNOR" id="Q13562"/>
<dbReference type="BioGRID-ORCS" id="4760">
    <property type="hits" value="9 hits in 1175 CRISPR screens"/>
</dbReference>
<dbReference type="GeneWiki" id="NEUROD1"/>
<dbReference type="GenomeRNAi" id="4760"/>
<dbReference type="Pharos" id="Q13562">
    <property type="development level" value="Tbio"/>
</dbReference>
<dbReference type="PRO" id="PR:Q13562"/>
<dbReference type="Proteomes" id="UP000005640">
    <property type="component" value="Chromosome 2"/>
</dbReference>
<dbReference type="RNAct" id="Q13562">
    <property type="molecule type" value="protein"/>
</dbReference>
<dbReference type="Bgee" id="ENSG00000162992">
    <property type="expression patterns" value="Expressed in paraflocculus and 79 other cell types or tissues"/>
</dbReference>
<dbReference type="ExpressionAtlas" id="Q13562">
    <property type="expression patterns" value="baseline and differential"/>
</dbReference>
<dbReference type="GO" id="GO:0000785">
    <property type="term" value="C:chromatin"/>
    <property type="evidence" value="ECO:0000247"/>
    <property type="project" value="NTNU_SB"/>
</dbReference>
<dbReference type="GO" id="GO:0005737">
    <property type="term" value="C:cytoplasm"/>
    <property type="evidence" value="ECO:0007669"/>
    <property type="project" value="UniProtKB-SubCell"/>
</dbReference>
<dbReference type="GO" id="GO:0005654">
    <property type="term" value="C:nucleoplasm"/>
    <property type="evidence" value="ECO:0000304"/>
    <property type="project" value="Reactome"/>
</dbReference>
<dbReference type="GO" id="GO:0005634">
    <property type="term" value="C:nucleus"/>
    <property type="evidence" value="ECO:0000314"/>
    <property type="project" value="UniProtKB"/>
</dbReference>
<dbReference type="GO" id="GO:0090575">
    <property type="term" value="C:RNA polymerase II transcription regulator complex"/>
    <property type="evidence" value="ECO:0000314"/>
    <property type="project" value="BHF-UCL"/>
</dbReference>
<dbReference type="GO" id="GO:0003682">
    <property type="term" value="F:chromatin binding"/>
    <property type="evidence" value="ECO:0000250"/>
    <property type="project" value="UniProtKB"/>
</dbReference>
<dbReference type="GO" id="GO:0001228">
    <property type="term" value="F:DNA-binding transcription activator activity, RNA polymerase II-specific"/>
    <property type="evidence" value="ECO:0000314"/>
    <property type="project" value="GO_Central"/>
</dbReference>
<dbReference type="GO" id="GO:0003700">
    <property type="term" value="F:DNA-binding transcription factor activity"/>
    <property type="evidence" value="ECO:0000314"/>
    <property type="project" value="BHF-UCL"/>
</dbReference>
<dbReference type="GO" id="GO:0000981">
    <property type="term" value="F:DNA-binding transcription factor activity, RNA polymerase II-specific"/>
    <property type="evidence" value="ECO:0000314"/>
    <property type="project" value="BHF-UCL"/>
</dbReference>
<dbReference type="GO" id="GO:0070888">
    <property type="term" value="F:E-box binding"/>
    <property type="evidence" value="ECO:0000314"/>
    <property type="project" value="UniProtKB"/>
</dbReference>
<dbReference type="GO" id="GO:0046982">
    <property type="term" value="F:protein heterodimerization activity"/>
    <property type="evidence" value="ECO:0000314"/>
    <property type="project" value="UniProtKB"/>
</dbReference>
<dbReference type="GO" id="GO:0061629">
    <property type="term" value="F:RNA polymerase II-specific DNA-binding transcription factor binding"/>
    <property type="evidence" value="ECO:0000353"/>
    <property type="project" value="BHF-UCL"/>
</dbReference>
<dbReference type="GO" id="GO:1990837">
    <property type="term" value="F:sequence-specific double-stranded DNA binding"/>
    <property type="evidence" value="ECO:0000314"/>
    <property type="project" value="ARUK-UCL"/>
</dbReference>
<dbReference type="GO" id="GO:0035881">
    <property type="term" value="P:amacrine cell differentiation"/>
    <property type="evidence" value="ECO:0000250"/>
    <property type="project" value="UniProtKB"/>
</dbReference>
<dbReference type="GO" id="GO:0009952">
    <property type="term" value="P:anterior/posterior pattern specification"/>
    <property type="evidence" value="ECO:0007669"/>
    <property type="project" value="Ensembl"/>
</dbReference>
<dbReference type="GO" id="GO:0061564">
    <property type="term" value="P:axon development"/>
    <property type="evidence" value="ECO:0000318"/>
    <property type="project" value="GO_Central"/>
</dbReference>
<dbReference type="GO" id="GO:0007259">
    <property type="term" value="P:cell surface receptor signaling pathway via JAK-STAT"/>
    <property type="evidence" value="ECO:0007669"/>
    <property type="project" value="Ensembl"/>
</dbReference>
<dbReference type="GO" id="GO:0021549">
    <property type="term" value="P:cerebellum development"/>
    <property type="evidence" value="ECO:0000250"/>
    <property type="project" value="UniProtKB"/>
</dbReference>
<dbReference type="GO" id="GO:0021542">
    <property type="term" value="P:dentate gyrus development"/>
    <property type="evidence" value="ECO:0000250"/>
    <property type="project" value="UniProtKB"/>
</dbReference>
<dbReference type="GO" id="GO:0048562">
    <property type="term" value="P:embryonic organ morphogenesis"/>
    <property type="evidence" value="ECO:0000250"/>
    <property type="project" value="BHF-UCL"/>
</dbReference>
<dbReference type="GO" id="GO:0031018">
    <property type="term" value="P:endocrine pancreas development"/>
    <property type="evidence" value="ECO:0000250"/>
    <property type="project" value="UniProtKB"/>
</dbReference>
<dbReference type="GO" id="GO:0035883">
    <property type="term" value="P:enteroendocrine cell differentiation"/>
    <property type="evidence" value="ECO:0000250"/>
    <property type="project" value="UniProtKB"/>
</dbReference>
<dbReference type="GO" id="GO:0042593">
    <property type="term" value="P:glucose homeostasis"/>
    <property type="evidence" value="ECO:0000250"/>
    <property type="project" value="BHF-UCL"/>
</dbReference>
<dbReference type="GO" id="GO:0048839">
    <property type="term" value="P:inner ear development"/>
    <property type="evidence" value="ECO:0000250"/>
    <property type="project" value="UniProtKB"/>
</dbReference>
<dbReference type="GO" id="GO:0030073">
    <property type="term" value="P:insulin secretion"/>
    <property type="evidence" value="ECO:0000314"/>
    <property type="project" value="BHF-UCL"/>
</dbReference>
<dbReference type="GO" id="GO:0046426">
    <property type="term" value="P:negative regulation of receptor signaling pathway via JAK-STAT"/>
    <property type="evidence" value="ECO:0007669"/>
    <property type="project" value="Ensembl"/>
</dbReference>
<dbReference type="GO" id="GO:2000675">
    <property type="term" value="P:negative regulation of type B pancreatic cell apoptotic process"/>
    <property type="evidence" value="ECO:0000250"/>
    <property type="project" value="BHF-UCL"/>
</dbReference>
<dbReference type="GO" id="GO:0022008">
    <property type="term" value="P:neurogenesis"/>
    <property type="evidence" value="ECO:0000304"/>
    <property type="project" value="BHF-UCL"/>
</dbReference>
<dbReference type="GO" id="GO:0003326">
    <property type="term" value="P:pancreatic A cell fate commitment"/>
    <property type="evidence" value="ECO:0007669"/>
    <property type="project" value="Ensembl"/>
</dbReference>
<dbReference type="GO" id="GO:0003329">
    <property type="term" value="P:pancreatic PP cell fate commitment"/>
    <property type="evidence" value="ECO:0007669"/>
    <property type="project" value="Ensembl"/>
</dbReference>
<dbReference type="GO" id="GO:0043065">
    <property type="term" value="P:positive regulation of apoptotic process"/>
    <property type="evidence" value="ECO:0000250"/>
    <property type="project" value="UniProtKB"/>
</dbReference>
<dbReference type="GO" id="GO:0045597">
    <property type="term" value="P:positive regulation of cell differentiation"/>
    <property type="evidence" value="ECO:0000250"/>
    <property type="project" value="UniProtKB"/>
</dbReference>
<dbReference type="GO" id="GO:0051091">
    <property type="term" value="P:positive regulation of DNA-binding transcription factor activity"/>
    <property type="evidence" value="ECO:0000314"/>
    <property type="project" value="UniProtKB"/>
</dbReference>
<dbReference type="GO" id="GO:0045893">
    <property type="term" value="P:positive regulation of DNA-templated transcription"/>
    <property type="evidence" value="ECO:0000250"/>
    <property type="project" value="UniProtKB"/>
</dbReference>
<dbReference type="GO" id="GO:0045666">
    <property type="term" value="P:positive regulation of neuron differentiation"/>
    <property type="evidence" value="ECO:0000250"/>
    <property type="project" value="UniProtKB"/>
</dbReference>
<dbReference type="GO" id="GO:0045944">
    <property type="term" value="P:positive regulation of transcription by RNA polymerase II"/>
    <property type="evidence" value="ECO:0000314"/>
    <property type="project" value="BHF-UCL"/>
</dbReference>
<dbReference type="GO" id="GO:2000679">
    <property type="term" value="P:positive regulation of transcription regulatory region DNA binding"/>
    <property type="evidence" value="ECO:0000314"/>
    <property type="project" value="BHF-UCL"/>
</dbReference>
<dbReference type="GO" id="GO:0050796">
    <property type="term" value="P:regulation of insulin secretion"/>
    <property type="evidence" value="ECO:0000305"/>
    <property type="project" value="BHF-UCL"/>
</dbReference>
<dbReference type="GO" id="GO:0060730">
    <property type="term" value="P:regulation of intestinal epithelial structure maintenance"/>
    <property type="evidence" value="ECO:0000250"/>
    <property type="project" value="UniProtKB"/>
</dbReference>
<dbReference type="GO" id="GO:0009749">
    <property type="term" value="P:response to glucose"/>
    <property type="evidence" value="ECO:0000315"/>
    <property type="project" value="BHF-UCL"/>
</dbReference>
<dbReference type="GO" id="GO:0007423">
    <property type="term" value="P:sensory organ development"/>
    <property type="evidence" value="ECO:0000318"/>
    <property type="project" value="GO_Central"/>
</dbReference>
<dbReference type="GO" id="GO:0023019">
    <property type="term" value="P:signal transduction involved in regulation of gene expression"/>
    <property type="evidence" value="ECO:0007669"/>
    <property type="project" value="Ensembl"/>
</dbReference>
<dbReference type="GO" id="GO:0006366">
    <property type="term" value="P:transcription by RNA polymerase II"/>
    <property type="evidence" value="ECO:0007669"/>
    <property type="project" value="Ensembl"/>
</dbReference>
<dbReference type="CDD" id="cd19719">
    <property type="entry name" value="bHLH_TS_NeuroD1"/>
    <property type="match status" value="1"/>
</dbReference>
<dbReference type="FunFam" id="4.10.280.10:FF:000006">
    <property type="entry name" value="Neurogenic differentiation factor"/>
    <property type="match status" value="1"/>
</dbReference>
<dbReference type="Gene3D" id="4.10.280.10">
    <property type="entry name" value="Helix-loop-helix DNA-binding domain"/>
    <property type="match status" value="1"/>
</dbReference>
<dbReference type="InterPro" id="IPR011598">
    <property type="entry name" value="bHLH_dom"/>
</dbReference>
<dbReference type="InterPro" id="IPR050359">
    <property type="entry name" value="bHLH_transcription_factors"/>
</dbReference>
<dbReference type="InterPro" id="IPR036638">
    <property type="entry name" value="HLH_DNA-bd_sf"/>
</dbReference>
<dbReference type="InterPro" id="IPR022575">
    <property type="entry name" value="NeuroD_DUF"/>
</dbReference>
<dbReference type="InterPro" id="IPR016637">
    <property type="entry name" value="TF_bHLH_NeuroD"/>
</dbReference>
<dbReference type="PANTHER" id="PTHR19290">
    <property type="entry name" value="BASIC HELIX-LOOP-HELIX PROTEIN NEUROGENIN-RELATED"/>
    <property type="match status" value="1"/>
</dbReference>
<dbReference type="PANTHER" id="PTHR19290:SF88">
    <property type="entry name" value="NEUROGENIC DIFFERENTIATION FACTOR 1"/>
    <property type="match status" value="1"/>
</dbReference>
<dbReference type="Pfam" id="PF00010">
    <property type="entry name" value="HLH"/>
    <property type="match status" value="1"/>
</dbReference>
<dbReference type="Pfam" id="PF12533">
    <property type="entry name" value="Neuro_bHLH"/>
    <property type="match status" value="1"/>
</dbReference>
<dbReference type="PIRSF" id="PIRSF015618">
    <property type="entry name" value="bHLH_NeuroD"/>
    <property type="match status" value="1"/>
</dbReference>
<dbReference type="SMART" id="SM00353">
    <property type="entry name" value="HLH"/>
    <property type="match status" value="1"/>
</dbReference>
<dbReference type="SUPFAM" id="SSF47459">
    <property type="entry name" value="HLH, helix-loop-helix DNA-binding domain"/>
    <property type="match status" value="1"/>
</dbReference>
<dbReference type="PROSITE" id="PS50888">
    <property type="entry name" value="BHLH"/>
    <property type="match status" value="1"/>
</dbReference>
<gene>
    <name type="primary">NEUROD1</name>
    <name type="synonym">BHLHA3</name>
    <name type="synonym">NEUROD</name>
</gene>
<reference key="1">
    <citation type="journal article" date="1996" name="Genomics">
        <title>The NEUROD gene maps to human chromosome 2q32 and mouse chromosome 2.</title>
        <authorList>
            <person name="Tamimi R."/>
            <person name="Steingrimsson E."/>
            <person name="Copeland N.G."/>
            <person name="Dyer-Montgomery K."/>
            <person name="Lee J.E."/>
            <person name="Hernandez R."/>
            <person name="Jenkins N.A."/>
            <person name="Tapscott S.J."/>
        </authorList>
    </citation>
    <scope>NUCLEOTIDE SEQUENCE [GENOMIC DNA]</scope>
    <scope>VARIANT ALA-45</scope>
</reference>
<reference key="2">
    <citation type="journal article" date="1996" name="Brain Res. Mol. Brain Res.">
        <title>Molecular cloning of a human neuroD from a neuroblastoma cell line specifically expressed in the fetal brain and adult cerebellum.</title>
        <authorList>
            <person name="Yokoyama M."/>
            <person name="Nishi Y."/>
            <person name="Miyamoto Y."/>
            <person name="Nakamura M."/>
            <person name="Akiyama K."/>
            <person name="Matsubara K."/>
            <person name="Okubo K."/>
        </authorList>
    </citation>
    <scope>NUCLEOTIDE SEQUENCE [MRNA]</scope>
    <scope>VARIANT ALA-45</scope>
</reference>
<reference key="3">
    <citation type="submission" date="1998-01" db="EMBL/GenBank/DDBJ databases">
        <authorList>
            <person name="Furuta H."/>
            <person name="Horikawa Y."/>
            <person name="Iwasaki N."/>
            <person name="Hara M."/>
            <person name="Sussel L."/>
            <person name="le Beau M.M."/>
            <person name="Davis E.M."/>
            <person name="Ogata M."/>
            <person name="Iwamoto Y."/>
            <person name="German M.S."/>
            <person name="Bell G.I."/>
        </authorList>
    </citation>
    <scope>NUCLEOTIDE SEQUENCE [GENOMIC DNA]</scope>
    <scope>VARIANT ALA-45</scope>
</reference>
<reference key="4">
    <citation type="journal article" date="1999" name="Brain Res. Mol. Brain Res.">
        <title>Structure and regulation of the human NeuroD (BETA2/BHF1) gene.</title>
        <authorList>
            <person name="Miyachi T."/>
            <person name="Maruyama H."/>
            <person name="Kitamura T."/>
            <person name="Nakamura S."/>
            <person name="Kawakami H."/>
        </authorList>
    </citation>
    <scope>NUCLEOTIDE SEQUENCE [GENOMIC DNA]</scope>
    <scope>VARIANT ALA-45</scope>
</reference>
<reference key="5">
    <citation type="submission" date="1997-12" db="EMBL/GenBank/DDBJ databases">
        <authorList>
            <person name="Noma T."/>
        </authorList>
    </citation>
    <scope>NUCLEOTIDE SEQUENCE [GENOMIC DNA]</scope>
    <scope>VARIANT ALA-45</scope>
</reference>
<reference key="6">
    <citation type="submission" date="1998-07" db="EMBL/GenBank/DDBJ databases">
        <title>Ala45Thr mutation of the human BETA2 gene.</title>
        <authorList>
            <person name="Kuroe A."/>
            <person name="Yamada Y."/>
            <person name="Kubota A."/>
            <person name="Someya Y."/>
            <person name="Iwakura T."/>
            <person name="Watanabe R."/>
            <person name="Inada A."/>
            <person name="Miyawaki K."/>
            <person name="Ban N."/>
            <person name="Ihara Y."/>
            <person name="Seino Y."/>
        </authorList>
    </citation>
    <scope>NUCLEOTIDE SEQUENCE [GENOMIC DNA]</scope>
    <scope>VARIANT ALA-45</scope>
</reference>
<reference key="7">
    <citation type="submission" date="2004-10" db="EMBL/GenBank/DDBJ databases">
        <title>Cloning of human full-length CDSs in BD Creator(TM) system donor vector.</title>
        <authorList>
            <person name="Kalnine N."/>
            <person name="Chen X."/>
            <person name="Rolfs A."/>
            <person name="Halleck A."/>
            <person name="Hines L."/>
            <person name="Eisenstein S."/>
            <person name="Koundinya M."/>
            <person name="Raphael J."/>
            <person name="Moreira D."/>
            <person name="Kelley T."/>
            <person name="LaBaer J."/>
            <person name="Lin Y."/>
            <person name="Phelan M."/>
            <person name="Farmer A."/>
        </authorList>
    </citation>
    <scope>NUCLEOTIDE SEQUENCE [LARGE SCALE MRNA]</scope>
</reference>
<reference key="8">
    <citation type="journal article" date="2004" name="Nat. Genet.">
        <title>Complete sequencing and characterization of 21,243 full-length human cDNAs.</title>
        <authorList>
            <person name="Ota T."/>
            <person name="Suzuki Y."/>
            <person name="Nishikawa T."/>
            <person name="Otsuki T."/>
            <person name="Sugiyama T."/>
            <person name="Irie R."/>
            <person name="Wakamatsu A."/>
            <person name="Hayashi K."/>
            <person name="Sato H."/>
            <person name="Nagai K."/>
            <person name="Kimura K."/>
            <person name="Makita H."/>
            <person name="Sekine M."/>
            <person name="Obayashi M."/>
            <person name="Nishi T."/>
            <person name="Shibahara T."/>
            <person name="Tanaka T."/>
            <person name="Ishii S."/>
            <person name="Yamamoto J."/>
            <person name="Saito K."/>
            <person name="Kawai Y."/>
            <person name="Isono Y."/>
            <person name="Nakamura Y."/>
            <person name="Nagahari K."/>
            <person name="Murakami K."/>
            <person name="Yasuda T."/>
            <person name="Iwayanagi T."/>
            <person name="Wagatsuma M."/>
            <person name="Shiratori A."/>
            <person name="Sudo H."/>
            <person name="Hosoiri T."/>
            <person name="Kaku Y."/>
            <person name="Kodaira H."/>
            <person name="Kondo H."/>
            <person name="Sugawara M."/>
            <person name="Takahashi M."/>
            <person name="Kanda K."/>
            <person name="Yokoi T."/>
            <person name="Furuya T."/>
            <person name="Kikkawa E."/>
            <person name="Omura Y."/>
            <person name="Abe K."/>
            <person name="Kamihara K."/>
            <person name="Katsuta N."/>
            <person name="Sato K."/>
            <person name="Tanikawa M."/>
            <person name="Yamazaki M."/>
            <person name="Ninomiya K."/>
            <person name="Ishibashi T."/>
            <person name="Yamashita H."/>
            <person name="Murakawa K."/>
            <person name="Fujimori K."/>
            <person name="Tanai H."/>
            <person name="Kimata M."/>
            <person name="Watanabe M."/>
            <person name="Hiraoka S."/>
            <person name="Chiba Y."/>
            <person name="Ishida S."/>
            <person name="Ono Y."/>
            <person name="Takiguchi S."/>
            <person name="Watanabe S."/>
            <person name="Yosida M."/>
            <person name="Hotuta T."/>
            <person name="Kusano J."/>
            <person name="Kanehori K."/>
            <person name="Takahashi-Fujii A."/>
            <person name="Hara H."/>
            <person name="Tanase T.-O."/>
            <person name="Nomura Y."/>
            <person name="Togiya S."/>
            <person name="Komai F."/>
            <person name="Hara R."/>
            <person name="Takeuchi K."/>
            <person name="Arita M."/>
            <person name="Imose N."/>
            <person name="Musashino K."/>
            <person name="Yuuki H."/>
            <person name="Oshima A."/>
            <person name="Sasaki N."/>
            <person name="Aotsuka S."/>
            <person name="Yoshikawa Y."/>
            <person name="Matsunawa H."/>
            <person name="Ichihara T."/>
            <person name="Shiohata N."/>
            <person name="Sano S."/>
            <person name="Moriya S."/>
            <person name="Momiyama H."/>
            <person name="Satoh N."/>
            <person name="Takami S."/>
            <person name="Terashima Y."/>
            <person name="Suzuki O."/>
            <person name="Nakagawa S."/>
            <person name="Senoh A."/>
            <person name="Mizoguchi H."/>
            <person name="Goto Y."/>
            <person name="Shimizu F."/>
            <person name="Wakebe H."/>
            <person name="Hishigaki H."/>
            <person name="Watanabe T."/>
            <person name="Sugiyama A."/>
            <person name="Takemoto M."/>
            <person name="Kawakami B."/>
            <person name="Yamazaki M."/>
            <person name="Watanabe K."/>
            <person name="Kumagai A."/>
            <person name="Itakura S."/>
            <person name="Fukuzumi Y."/>
            <person name="Fujimori Y."/>
            <person name="Komiyama M."/>
            <person name="Tashiro H."/>
            <person name="Tanigami A."/>
            <person name="Fujiwara T."/>
            <person name="Ono T."/>
            <person name="Yamada K."/>
            <person name="Fujii Y."/>
            <person name="Ozaki K."/>
            <person name="Hirao M."/>
            <person name="Ohmori Y."/>
            <person name="Kawabata A."/>
            <person name="Hikiji T."/>
            <person name="Kobatake N."/>
            <person name="Inagaki H."/>
            <person name="Ikema Y."/>
            <person name="Okamoto S."/>
            <person name="Okitani R."/>
            <person name="Kawakami T."/>
            <person name="Noguchi S."/>
            <person name="Itoh T."/>
            <person name="Shigeta K."/>
            <person name="Senba T."/>
            <person name="Matsumura K."/>
            <person name="Nakajima Y."/>
            <person name="Mizuno T."/>
            <person name="Morinaga M."/>
            <person name="Sasaki M."/>
            <person name="Togashi T."/>
            <person name="Oyama M."/>
            <person name="Hata H."/>
            <person name="Watanabe M."/>
            <person name="Komatsu T."/>
            <person name="Mizushima-Sugano J."/>
            <person name="Satoh T."/>
            <person name="Shirai Y."/>
            <person name="Takahashi Y."/>
            <person name="Nakagawa K."/>
            <person name="Okumura K."/>
            <person name="Nagase T."/>
            <person name="Nomura N."/>
            <person name="Kikuchi H."/>
            <person name="Masuho Y."/>
            <person name="Yamashita R."/>
            <person name="Nakai K."/>
            <person name="Yada T."/>
            <person name="Nakamura Y."/>
            <person name="Ohara O."/>
            <person name="Isogai T."/>
            <person name="Sugano S."/>
        </authorList>
    </citation>
    <scope>NUCLEOTIDE SEQUENCE [LARGE SCALE MRNA]</scope>
    <scope>VARIANT ALA-45</scope>
    <source>
        <tissue>Cerebellum</tissue>
    </source>
</reference>
<reference key="9">
    <citation type="journal article" date="2011" name="Invest. Ophthalmol. Vis. Sci.">
        <title>Full-length transcriptome analysis of human retina-derived cell lines ARPE-19 and Y79 using the vector-capping method.</title>
        <authorList>
            <person name="Oshikawa M."/>
            <person name="Tsutsui C."/>
            <person name="Ikegami T."/>
            <person name="Fuchida Y."/>
            <person name="Matsubara M."/>
            <person name="Toyama S."/>
            <person name="Usami R."/>
            <person name="Ohtoko K."/>
            <person name="Kato S."/>
        </authorList>
    </citation>
    <scope>NUCLEOTIDE SEQUENCE [LARGE SCALE MRNA]</scope>
    <scope>VARIANT ALA-45</scope>
</reference>
<reference key="10">
    <citation type="journal article" date="2005" name="Nature">
        <title>Generation and annotation of the DNA sequences of human chromosomes 2 and 4.</title>
        <authorList>
            <person name="Hillier L.W."/>
            <person name="Graves T.A."/>
            <person name="Fulton R.S."/>
            <person name="Fulton L.A."/>
            <person name="Pepin K.H."/>
            <person name="Minx P."/>
            <person name="Wagner-McPherson C."/>
            <person name="Layman D."/>
            <person name="Wylie K."/>
            <person name="Sekhon M."/>
            <person name="Becker M.C."/>
            <person name="Fewell G.A."/>
            <person name="Delehaunty K.D."/>
            <person name="Miner T.L."/>
            <person name="Nash W.E."/>
            <person name="Kremitzki C."/>
            <person name="Oddy L."/>
            <person name="Du H."/>
            <person name="Sun H."/>
            <person name="Bradshaw-Cordum H."/>
            <person name="Ali J."/>
            <person name="Carter J."/>
            <person name="Cordes M."/>
            <person name="Harris A."/>
            <person name="Isak A."/>
            <person name="van Brunt A."/>
            <person name="Nguyen C."/>
            <person name="Du F."/>
            <person name="Courtney L."/>
            <person name="Kalicki J."/>
            <person name="Ozersky P."/>
            <person name="Abbott S."/>
            <person name="Armstrong J."/>
            <person name="Belter E.A."/>
            <person name="Caruso L."/>
            <person name="Cedroni M."/>
            <person name="Cotton M."/>
            <person name="Davidson T."/>
            <person name="Desai A."/>
            <person name="Elliott G."/>
            <person name="Erb T."/>
            <person name="Fronick C."/>
            <person name="Gaige T."/>
            <person name="Haakenson W."/>
            <person name="Haglund K."/>
            <person name="Holmes A."/>
            <person name="Harkins R."/>
            <person name="Kim K."/>
            <person name="Kruchowski S.S."/>
            <person name="Strong C.M."/>
            <person name="Grewal N."/>
            <person name="Goyea E."/>
            <person name="Hou S."/>
            <person name="Levy A."/>
            <person name="Martinka S."/>
            <person name="Mead K."/>
            <person name="McLellan M.D."/>
            <person name="Meyer R."/>
            <person name="Randall-Maher J."/>
            <person name="Tomlinson C."/>
            <person name="Dauphin-Kohlberg S."/>
            <person name="Kozlowicz-Reilly A."/>
            <person name="Shah N."/>
            <person name="Swearengen-Shahid S."/>
            <person name="Snider J."/>
            <person name="Strong J.T."/>
            <person name="Thompson J."/>
            <person name="Yoakum M."/>
            <person name="Leonard S."/>
            <person name="Pearman C."/>
            <person name="Trani L."/>
            <person name="Radionenko M."/>
            <person name="Waligorski J.E."/>
            <person name="Wang C."/>
            <person name="Rock S.M."/>
            <person name="Tin-Wollam A.-M."/>
            <person name="Maupin R."/>
            <person name="Latreille P."/>
            <person name="Wendl M.C."/>
            <person name="Yang S.-P."/>
            <person name="Pohl C."/>
            <person name="Wallis J.W."/>
            <person name="Spieth J."/>
            <person name="Bieri T.A."/>
            <person name="Berkowicz N."/>
            <person name="Nelson J.O."/>
            <person name="Osborne J."/>
            <person name="Ding L."/>
            <person name="Meyer R."/>
            <person name="Sabo A."/>
            <person name="Shotland Y."/>
            <person name="Sinha P."/>
            <person name="Wohldmann P.E."/>
            <person name="Cook L.L."/>
            <person name="Hickenbotham M.T."/>
            <person name="Eldred J."/>
            <person name="Williams D."/>
            <person name="Jones T.A."/>
            <person name="She X."/>
            <person name="Ciccarelli F.D."/>
            <person name="Izaurralde E."/>
            <person name="Taylor J."/>
            <person name="Schmutz J."/>
            <person name="Myers R.M."/>
            <person name="Cox D.R."/>
            <person name="Huang X."/>
            <person name="McPherson J.D."/>
            <person name="Mardis E.R."/>
            <person name="Clifton S.W."/>
            <person name="Warren W.C."/>
            <person name="Chinwalla A.T."/>
            <person name="Eddy S.R."/>
            <person name="Marra M.A."/>
            <person name="Ovcharenko I."/>
            <person name="Furey T.S."/>
            <person name="Miller W."/>
            <person name="Eichler E.E."/>
            <person name="Bork P."/>
            <person name="Suyama M."/>
            <person name="Torrents D."/>
            <person name="Waterston R.H."/>
            <person name="Wilson R.K."/>
        </authorList>
    </citation>
    <scope>NUCLEOTIDE SEQUENCE [LARGE SCALE GENOMIC DNA]</scope>
</reference>
<reference key="11">
    <citation type="submission" date="2005-09" db="EMBL/GenBank/DDBJ databases">
        <authorList>
            <person name="Mural R.J."/>
            <person name="Istrail S."/>
            <person name="Sutton G.G."/>
            <person name="Florea L."/>
            <person name="Halpern A.L."/>
            <person name="Mobarry C.M."/>
            <person name="Lippert R."/>
            <person name="Walenz B."/>
            <person name="Shatkay H."/>
            <person name="Dew I."/>
            <person name="Miller J.R."/>
            <person name="Flanigan M.J."/>
            <person name="Edwards N.J."/>
            <person name="Bolanos R."/>
            <person name="Fasulo D."/>
            <person name="Halldorsson B.V."/>
            <person name="Hannenhalli S."/>
            <person name="Turner R."/>
            <person name="Yooseph S."/>
            <person name="Lu F."/>
            <person name="Nusskern D.R."/>
            <person name="Shue B.C."/>
            <person name="Zheng X.H."/>
            <person name="Zhong F."/>
            <person name="Delcher A.L."/>
            <person name="Huson D.H."/>
            <person name="Kravitz S.A."/>
            <person name="Mouchard L."/>
            <person name="Reinert K."/>
            <person name="Remington K.A."/>
            <person name="Clark A.G."/>
            <person name="Waterman M.S."/>
            <person name="Eichler E.E."/>
            <person name="Adams M.D."/>
            <person name="Hunkapiller M.W."/>
            <person name="Myers E.W."/>
            <person name="Venter J.C."/>
        </authorList>
    </citation>
    <scope>NUCLEOTIDE SEQUENCE [LARGE SCALE GENOMIC DNA]</scope>
    <scope>VARIANT ALA-45</scope>
</reference>
<reference key="12">
    <citation type="journal article" date="2004" name="Genome Res.">
        <title>The status, quality, and expansion of the NIH full-length cDNA project: the Mammalian Gene Collection (MGC).</title>
        <authorList>
            <consortium name="The MGC Project Team"/>
        </authorList>
    </citation>
    <scope>NUCLEOTIDE SEQUENCE [LARGE SCALE MRNA]</scope>
    <scope>VARIANT ALA-45</scope>
    <source>
        <tissue>Eye</tissue>
    </source>
</reference>
<reference key="13">
    <citation type="journal article" date="1997" name="Biochem. Biophys. Res. Commun.">
        <title>cDNA cloning and expression analysis of NeuroD mRNA in human retina.</title>
        <authorList>
            <person name="Acharya H.R."/>
            <person name="Dooley C.M."/>
            <person name="Thoreson W.B."/>
            <person name="Ahmad I."/>
        </authorList>
    </citation>
    <scope>NUCLEOTIDE SEQUENCE [MRNA] OF 88-200</scope>
    <source>
        <tissue>Retina</tissue>
    </source>
</reference>
<reference key="14">
    <citation type="submission" date="1995-09" db="EMBL/GenBank/DDBJ databases">
        <authorList>
            <person name="Shum C.H."/>
            <person name="Triche T.J."/>
        </authorList>
    </citation>
    <scope>NUCLEOTIDE SEQUENCE [MRNA] OF 147-198</scope>
    <source>
        <tissue>Rhabdomyosarcoma</tissue>
    </source>
</reference>
<reference key="15">
    <citation type="journal article" date="2003" name="Mol. Cell. Biol.">
        <title>Novel transcriptional potentiation of BETA2/NeuroD on the secretin gene promoter by the DNA-binding protein Finb/RREB-1.</title>
        <authorList>
            <person name="Ray S.K."/>
            <person name="Nishitani J."/>
            <person name="Petry M.W."/>
            <person name="Fessing M.Y."/>
            <person name="Leiter A.B."/>
        </authorList>
    </citation>
    <scope>INTERACTION WITH RREB1</scope>
</reference>
<reference key="16">
    <citation type="journal article" date="2004" name="Mol. Endocrinol.">
        <title>Orphan nuclear receptor small heterodimer partner, a novel corepressor for a basic helix-loop-helix transcription factor BETA2/neuroD.</title>
        <authorList>
            <person name="Kim J.Y."/>
            <person name="Chu K."/>
            <person name="Kim H.J."/>
            <person name="Seong H.A."/>
            <person name="Park K.C."/>
            <person name="Sanyal S."/>
            <person name="Takeda J."/>
            <person name="Ha H."/>
            <person name="Shong M."/>
            <person name="Tsai M.J."/>
            <person name="Choi H.S."/>
        </authorList>
    </citation>
    <scope>INTERACTION WITH NR0B2; EP300 AND TCF3</scope>
    <scope>HETERODIMERIZATION</scope>
    <scope>TISSUE SPECIFICITY</scope>
    <scope>SUBCELLULAR LOCATION</scope>
</reference>
<reference key="17">
    <citation type="journal article" date="1999" name="Nat. Genet.">
        <title>Mutations in NEUROD1 are associated with the development of type 2 diabetes mellitus.</title>
        <authorList>
            <person name="Malecki M.T."/>
            <person name="Jhala U.S."/>
            <person name="Antonellis A."/>
            <person name="Fields L."/>
            <person name="Doria A."/>
            <person name="Orban T."/>
            <person name="Saad M."/>
            <person name="Warram J.H."/>
            <person name="Montminy M."/>
            <person name="Krolewski A.S."/>
        </authorList>
    </citation>
    <scope>INVOLVEMENT IN MODY6 AND T2D</scope>
    <scope>VARIANT T2D LEU-111</scope>
</reference>
<reference key="18">
    <citation type="journal article" date="2001" name="Diabetologia">
        <title>MODY in Iceland is associated with mutations in HNF-1alpha and a novel mutation in NeuroD1.</title>
        <authorList>
            <person name="Kristinsson S.Y."/>
            <person name="Thorolfsdottir E.T."/>
            <person name="Talseth B."/>
            <person name="Steingrimsson E."/>
            <person name="Thorsson A.V."/>
            <person name="Helgason T."/>
            <person name="Hreidarsson A.B."/>
            <person name="Arngrimsson R."/>
        </authorList>
    </citation>
    <scope>VARIANT MODY6 LYS-110</scope>
</reference>
<reference key="19">
    <citation type="journal article" date="2015" name="Invest. Ophthalmol. Vis. Sci.">
        <title>A homozygous missense mutation in NEUROD1 is associated with nonsyndromic autosomal recessive retinitis pigmentosa.</title>
        <authorList>
            <person name="Wang F."/>
            <person name="Li H."/>
            <person name="Xu M."/>
            <person name="Li H."/>
            <person name="Zhao L."/>
            <person name="Yang L."/>
            <person name="Zaneveld J.E."/>
            <person name="Wang K."/>
            <person name="Li Y."/>
            <person name="Sui R."/>
            <person name="Chen R."/>
        </authorList>
    </citation>
    <scope>VARIANT ILE-242</scope>
</reference>
<reference key="20">
    <citation type="journal article" date="2016" name="Eur. J. Med. Genet.">
        <title>A family with the Arg103Pro mutation in the NEUROD1 gene detected by next-generation sequencing - Clinical characteristics of mutation carriers.</title>
        <authorList>
            <person name="Szopa M."/>
            <person name="Ludwig-Galezowska A.H."/>
            <person name="Radkowski P."/>
            <person name="Skupien J."/>
            <person name="Machlowska J."/>
            <person name="Klupa T."/>
            <person name="Wolkow P."/>
            <person name="Borowiec M."/>
            <person name="Mlynarski W."/>
            <person name="Malecki M.T."/>
        </authorList>
    </citation>
    <scope>VARIANT MODY6 PRO-103</scope>
</reference>
<proteinExistence type="evidence at protein level"/>